<gene>
    <name type="primary">Drip</name>
    <name type="ORF">CG9023</name>
</gene>
<comment type="function">
    <text evidence="1">Forms a water-specific channel.</text>
</comment>
<comment type="subunit">
    <text evidence="1">Homotetramer.</text>
</comment>
<comment type="subcellular location">
    <subcellularLocation>
        <location>Membrane</location>
        <topology>Multi-pass membrane protein</topology>
    </subcellularLocation>
</comment>
<comment type="domain">
    <text>Aquaporins contain two tandem repeats each containing three membrane-spanning domains and a pore-forming loop with the signature motif Asn-Pro-Ala (NPA).</text>
</comment>
<comment type="similarity">
    <text evidence="3">Belongs to the MIP/aquaporin (TC 1.A.8) family.</text>
</comment>
<evidence type="ECO:0000250" key="1"/>
<evidence type="ECO:0000255" key="2"/>
<evidence type="ECO:0000305" key="3"/>
<dbReference type="EMBL" id="AE013599">
    <property type="protein sequence ID" value="AAF58643.2"/>
    <property type="molecule type" value="Genomic_DNA"/>
</dbReference>
<dbReference type="EMBL" id="AE013599">
    <property type="protein sequence ID" value="AAM68740.2"/>
    <property type="molecule type" value="Genomic_DNA"/>
</dbReference>
<dbReference type="EMBL" id="BT023883">
    <property type="protein sequence ID" value="ABA81817.1"/>
    <property type="molecule type" value="mRNA"/>
</dbReference>
<dbReference type="EMBL" id="U38807">
    <property type="protein sequence ID" value="AAA81324.1"/>
    <property type="molecule type" value="mRNA"/>
</dbReference>
<dbReference type="RefSeq" id="NP_523697.1">
    <property type="nucleotide sequence ID" value="NM_078973.3"/>
</dbReference>
<dbReference type="RefSeq" id="NP_725051.2">
    <property type="nucleotide sequence ID" value="NM_165833.3"/>
</dbReference>
<dbReference type="SMR" id="Q9V5Z7"/>
<dbReference type="BioGRID" id="62024">
    <property type="interactions" value="22"/>
</dbReference>
<dbReference type="DIP" id="DIP-23832N"/>
<dbReference type="FunCoup" id="Q9V5Z7">
    <property type="interactions" value="35"/>
</dbReference>
<dbReference type="IntAct" id="Q9V5Z7">
    <property type="interactions" value="17"/>
</dbReference>
<dbReference type="STRING" id="7227.FBpp0303808"/>
<dbReference type="TCDB" id="1.A.8.8.13">
    <property type="family name" value="the major intrinsic protein (mip) family"/>
</dbReference>
<dbReference type="PaxDb" id="7227-FBpp0303808"/>
<dbReference type="DNASU" id="36236"/>
<dbReference type="EnsemblMetazoa" id="FBtr0088141">
    <property type="protein sequence ID" value="FBpp0087240"/>
    <property type="gene ID" value="FBgn0015872"/>
</dbReference>
<dbReference type="EnsemblMetazoa" id="FBtr0088142">
    <property type="protein sequence ID" value="FBpp0087241"/>
    <property type="gene ID" value="FBgn0015872"/>
</dbReference>
<dbReference type="GeneID" id="36236"/>
<dbReference type="KEGG" id="dme:Dmel_CG9023"/>
<dbReference type="AGR" id="FB:FBgn0015872"/>
<dbReference type="CTD" id="36236"/>
<dbReference type="FlyBase" id="FBgn0015872">
    <property type="gene designation" value="Drip"/>
</dbReference>
<dbReference type="VEuPathDB" id="VectorBase:FBgn0015872"/>
<dbReference type="eggNOG" id="KOG0223">
    <property type="taxonomic scope" value="Eukaryota"/>
</dbReference>
<dbReference type="GeneTree" id="ENSGT00940000176123"/>
<dbReference type="InParanoid" id="Q9V5Z7"/>
<dbReference type="OrthoDB" id="3222at2759"/>
<dbReference type="PhylomeDB" id="Q9V5Z7"/>
<dbReference type="Reactome" id="R-DME-1237044">
    <property type="pathway name" value="Erythrocytes take up carbon dioxide and release oxygen"/>
</dbReference>
<dbReference type="Reactome" id="R-DME-1247673">
    <property type="pathway name" value="Erythrocytes take up oxygen and release carbon dioxide"/>
</dbReference>
<dbReference type="Reactome" id="R-DME-432040">
    <property type="pathway name" value="Vasopressin regulates renal water homeostasis via Aquaporins"/>
</dbReference>
<dbReference type="Reactome" id="R-DME-432047">
    <property type="pathway name" value="Passive transport by Aquaporins"/>
</dbReference>
<dbReference type="BioGRID-ORCS" id="36236">
    <property type="hits" value="0 hits in 3 CRISPR screens"/>
</dbReference>
<dbReference type="ChiTaRS" id="Drip">
    <property type="organism name" value="fly"/>
</dbReference>
<dbReference type="GenomeRNAi" id="36236"/>
<dbReference type="PRO" id="PR:Q9V5Z7"/>
<dbReference type="Proteomes" id="UP000000803">
    <property type="component" value="Chromosome 2R"/>
</dbReference>
<dbReference type="Bgee" id="FBgn0015872">
    <property type="expression patterns" value="Expressed in adult tracheocyte (Drosophila) in insect leg and 99 other cell types or tissues"/>
</dbReference>
<dbReference type="ExpressionAtlas" id="Q9V5Z7">
    <property type="expression patterns" value="baseline and differential"/>
</dbReference>
<dbReference type="GO" id="GO:0016324">
    <property type="term" value="C:apical plasma membrane"/>
    <property type="evidence" value="ECO:0000314"/>
    <property type="project" value="FlyBase"/>
</dbReference>
<dbReference type="GO" id="GO:0016323">
    <property type="term" value="C:basolateral plasma membrane"/>
    <property type="evidence" value="ECO:0000314"/>
    <property type="project" value="FlyBase"/>
</dbReference>
<dbReference type="GO" id="GO:0016020">
    <property type="term" value="C:membrane"/>
    <property type="evidence" value="ECO:0000314"/>
    <property type="project" value="FlyBase"/>
</dbReference>
<dbReference type="GO" id="GO:0005886">
    <property type="term" value="C:plasma membrane"/>
    <property type="evidence" value="ECO:0000318"/>
    <property type="project" value="GO_Central"/>
</dbReference>
<dbReference type="GO" id="GO:0015250">
    <property type="term" value="F:water channel activity"/>
    <property type="evidence" value="ECO:0000314"/>
    <property type="project" value="FlyBase"/>
</dbReference>
<dbReference type="GO" id="GO:0050891">
    <property type="term" value="P:multicellular organismal-level water homeostasis"/>
    <property type="evidence" value="ECO:0000270"/>
    <property type="project" value="FlyBase"/>
</dbReference>
<dbReference type="GO" id="GO:0003091">
    <property type="term" value="P:renal water homeostasis"/>
    <property type="evidence" value="ECO:0000270"/>
    <property type="project" value="FlyBase"/>
</dbReference>
<dbReference type="GO" id="GO:0055085">
    <property type="term" value="P:transmembrane transport"/>
    <property type="evidence" value="ECO:0000314"/>
    <property type="project" value="FlyBase"/>
</dbReference>
<dbReference type="GO" id="GO:0006833">
    <property type="term" value="P:water transport"/>
    <property type="evidence" value="ECO:0000314"/>
    <property type="project" value="FlyBase"/>
</dbReference>
<dbReference type="CDD" id="cd00333">
    <property type="entry name" value="MIP"/>
    <property type="match status" value="1"/>
</dbReference>
<dbReference type="FunFam" id="1.20.1080.10:FF:000009">
    <property type="entry name" value="aquaporin-4 isoform X1"/>
    <property type="match status" value="1"/>
</dbReference>
<dbReference type="Gene3D" id="1.20.1080.10">
    <property type="entry name" value="Glycerol uptake facilitator protein"/>
    <property type="match status" value="1"/>
</dbReference>
<dbReference type="InterPro" id="IPR023271">
    <property type="entry name" value="Aquaporin-like"/>
</dbReference>
<dbReference type="InterPro" id="IPR034294">
    <property type="entry name" value="Aquaporin_transptr"/>
</dbReference>
<dbReference type="InterPro" id="IPR000425">
    <property type="entry name" value="MIP"/>
</dbReference>
<dbReference type="InterPro" id="IPR022357">
    <property type="entry name" value="MIP_CS"/>
</dbReference>
<dbReference type="NCBIfam" id="TIGR00861">
    <property type="entry name" value="MIP"/>
    <property type="match status" value="1"/>
</dbReference>
<dbReference type="PANTHER" id="PTHR19139:SF291">
    <property type="entry name" value="AQUAPORIN"/>
    <property type="match status" value="1"/>
</dbReference>
<dbReference type="PANTHER" id="PTHR19139">
    <property type="entry name" value="AQUAPORIN TRANSPORTER"/>
    <property type="match status" value="1"/>
</dbReference>
<dbReference type="Pfam" id="PF00230">
    <property type="entry name" value="MIP"/>
    <property type="match status" value="1"/>
</dbReference>
<dbReference type="PRINTS" id="PR00783">
    <property type="entry name" value="MINTRINSICP"/>
</dbReference>
<dbReference type="SUPFAM" id="SSF81338">
    <property type="entry name" value="Aquaporin-like"/>
    <property type="match status" value="1"/>
</dbReference>
<dbReference type="PROSITE" id="PS00221">
    <property type="entry name" value="MIP"/>
    <property type="match status" value="1"/>
</dbReference>
<accession>Q9V5Z7</accession>
<accession>Q24148</accession>
<accession>Q3KN56</accession>
<accession>Q8MKY6</accession>
<sequence>MVEKTEMSKFVGVADITENKKIWRMLLGELVGTFFLIFVGVGSTTSGSVPQIAFTFGLTVATIAQGLGHLSGCHINPAVTLGFLIVGEISILKAAFYIIVQCVGAIAGAAVIKVALDGVAGGDLGVSSFDPSLNCAQAVLIEALITFILVFVVKAVSDPGRQDIKGSAPLAVGLAIAAGHLCAIKLSGASMNPARSFGPAVVQGVWTYHWVYWVGPIAGGLLAGIIYRLIFKVRKGDDETDSYDF</sequence>
<keyword id="KW-0472">Membrane</keyword>
<keyword id="KW-1185">Reference proteome</keyword>
<keyword id="KW-0677">Repeat</keyword>
<keyword id="KW-0812">Transmembrane</keyword>
<keyword id="KW-1133">Transmembrane helix</keyword>
<keyword id="KW-0813">Transport</keyword>
<organism>
    <name type="scientific">Drosophila melanogaster</name>
    <name type="common">Fruit fly</name>
    <dbReference type="NCBI Taxonomy" id="7227"/>
    <lineage>
        <taxon>Eukaryota</taxon>
        <taxon>Metazoa</taxon>
        <taxon>Ecdysozoa</taxon>
        <taxon>Arthropoda</taxon>
        <taxon>Hexapoda</taxon>
        <taxon>Insecta</taxon>
        <taxon>Pterygota</taxon>
        <taxon>Neoptera</taxon>
        <taxon>Endopterygota</taxon>
        <taxon>Diptera</taxon>
        <taxon>Brachycera</taxon>
        <taxon>Muscomorpha</taxon>
        <taxon>Ephydroidea</taxon>
        <taxon>Drosophilidae</taxon>
        <taxon>Drosophila</taxon>
        <taxon>Sophophora</taxon>
    </lineage>
</organism>
<name>AQP_DROME</name>
<protein>
    <recommendedName>
        <fullName>Aquaporin</fullName>
    </recommendedName>
</protein>
<proteinExistence type="evidence at transcript level"/>
<reference key="1">
    <citation type="journal article" date="2000" name="Science">
        <title>The genome sequence of Drosophila melanogaster.</title>
        <authorList>
            <person name="Adams M.D."/>
            <person name="Celniker S.E."/>
            <person name="Holt R.A."/>
            <person name="Evans C.A."/>
            <person name="Gocayne J.D."/>
            <person name="Amanatides P.G."/>
            <person name="Scherer S.E."/>
            <person name="Li P.W."/>
            <person name="Hoskins R.A."/>
            <person name="Galle R.F."/>
            <person name="George R.A."/>
            <person name="Lewis S.E."/>
            <person name="Richards S."/>
            <person name="Ashburner M."/>
            <person name="Henderson S.N."/>
            <person name="Sutton G.G."/>
            <person name="Wortman J.R."/>
            <person name="Yandell M.D."/>
            <person name="Zhang Q."/>
            <person name="Chen L.X."/>
            <person name="Brandon R.C."/>
            <person name="Rogers Y.-H.C."/>
            <person name="Blazej R.G."/>
            <person name="Champe M."/>
            <person name="Pfeiffer B.D."/>
            <person name="Wan K.H."/>
            <person name="Doyle C."/>
            <person name="Baxter E.G."/>
            <person name="Helt G."/>
            <person name="Nelson C.R."/>
            <person name="Miklos G.L.G."/>
            <person name="Abril J.F."/>
            <person name="Agbayani A."/>
            <person name="An H.-J."/>
            <person name="Andrews-Pfannkoch C."/>
            <person name="Baldwin D."/>
            <person name="Ballew R.M."/>
            <person name="Basu A."/>
            <person name="Baxendale J."/>
            <person name="Bayraktaroglu L."/>
            <person name="Beasley E.M."/>
            <person name="Beeson K.Y."/>
            <person name="Benos P.V."/>
            <person name="Berman B.P."/>
            <person name="Bhandari D."/>
            <person name="Bolshakov S."/>
            <person name="Borkova D."/>
            <person name="Botchan M.R."/>
            <person name="Bouck J."/>
            <person name="Brokstein P."/>
            <person name="Brottier P."/>
            <person name="Burtis K.C."/>
            <person name="Busam D.A."/>
            <person name="Butler H."/>
            <person name="Cadieu E."/>
            <person name="Center A."/>
            <person name="Chandra I."/>
            <person name="Cherry J.M."/>
            <person name="Cawley S."/>
            <person name="Dahlke C."/>
            <person name="Davenport L.B."/>
            <person name="Davies P."/>
            <person name="de Pablos B."/>
            <person name="Delcher A."/>
            <person name="Deng Z."/>
            <person name="Mays A.D."/>
            <person name="Dew I."/>
            <person name="Dietz S.M."/>
            <person name="Dodson K."/>
            <person name="Doup L.E."/>
            <person name="Downes M."/>
            <person name="Dugan-Rocha S."/>
            <person name="Dunkov B.C."/>
            <person name="Dunn P."/>
            <person name="Durbin K.J."/>
            <person name="Evangelista C.C."/>
            <person name="Ferraz C."/>
            <person name="Ferriera S."/>
            <person name="Fleischmann W."/>
            <person name="Fosler C."/>
            <person name="Gabrielian A.E."/>
            <person name="Garg N.S."/>
            <person name="Gelbart W.M."/>
            <person name="Glasser K."/>
            <person name="Glodek A."/>
            <person name="Gong F."/>
            <person name="Gorrell J.H."/>
            <person name="Gu Z."/>
            <person name="Guan P."/>
            <person name="Harris M."/>
            <person name="Harris N.L."/>
            <person name="Harvey D.A."/>
            <person name="Heiman T.J."/>
            <person name="Hernandez J.R."/>
            <person name="Houck J."/>
            <person name="Hostin D."/>
            <person name="Houston K.A."/>
            <person name="Howland T.J."/>
            <person name="Wei M.-H."/>
            <person name="Ibegwam C."/>
            <person name="Jalali M."/>
            <person name="Kalush F."/>
            <person name="Karpen G.H."/>
            <person name="Ke Z."/>
            <person name="Kennison J.A."/>
            <person name="Ketchum K.A."/>
            <person name="Kimmel B.E."/>
            <person name="Kodira C.D."/>
            <person name="Kraft C.L."/>
            <person name="Kravitz S."/>
            <person name="Kulp D."/>
            <person name="Lai Z."/>
            <person name="Lasko P."/>
            <person name="Lei Y."/>
            <person name="Levitsky A.A."/>
            <person name="Li J.H."/>
            <person name="Li Z."/>
            <person name="Liang Y."/>
            <person name="Lin X."/>
            <person name="Liu X."/>
            <person name="Mattei B."/>
            <person name="McIntosh T.C."/>
            <person name="McLeod M.P."/>
            <person name="McPherson D."/>
            <person name="Merkulov G."/>
            <person name="Milshina N.V."/>
            <person name="Mobarry C."/>
            <person name="Morris J."/>
            <person name="Moshrefi A."/>
            <person name="Mount S.M."/>
            <person name="Moy M."/>
            <person name="Murphy B."/>
            <person name="Murphy L."/>
            <person name="Muzny D.M."/>
            <person name="Nelson D.L."/>
            <person name="Nelson D.R."/>
            <person name="Nelson K.A."/>
            <person name="Nixon K."/>
            <person name="Nusskern D.R."/>
            <person name="Pacleb J.M."/>
            <person name="Palazzolo M."/>
            <person name="Pittman G.S."/>
            <person name="Pan S."/>
            <person name="Pollard J."/>
            <person name="Puri V."/>
            <person name="Reese M.G."/>
            <person name="Reinert K."/>
            <person name="Remington K."/>
            <person name="Saunders R.D.C."/>
            <person name="Scheeler F."/>
            <person name="Shen H."/>
            <person name="Shue B.C."/>
            <person name="Siden-Kiamos I."/>
            <person name="Simpson M."/>
            <person name="Skupski M.P."/>
            <person name="Smith T.J."/>
            <person name="Spier E."/>
            <person name="Spradling A.C."/>
            <person name="Stapleton M."/>
            <person name="Strong R."/>
            <person name="Sun E."/>
            <person name="Svirskas R."/>
            <person name="Tector C."/>
            <person name="Turner R."/>
            <person name="Venter E."/>
            <person name="Wang A.H."/>
            <person name="Wang X."/>
            <person name="Wang Z.-Y."/>
            <person name="Wassarman D.A."/>
            <person name="Weinstock G.M."/>
            <person name="Weissenbach J."/>
            <person name="Williams S.M."/>
            <person name="Woodage T."/>
            <person name="Worley K.C."/>
            <person name="Wu D."/>
            <person name="Yang S."/>
            <person name="Yao Q.A."/>
            <person name="Ye J."/>
            <person name="Yeh R.-F."/>
            <person name="Zaveri J.S."/>
            <person name="Zhan M."/>
            <person name="Zhang G."/>
            <person name="Zhao Q."/>
            <person name="Zheng L."/>
            <person name="Zheng X.H."/>
            <person name="Zhong F.N."/>
            <person name="Zhong W."/>
            <person name="Zhou X."/>
            <person name="Zhu S.C."/>
            <person name="Zhu X."/>
            <person name="Smith H.O."/>
            <person name="Gibbs R.A."/>
            <person name="Myers E.W."/>
            <person name="Rubin G.M."/>
            <person name="Venter J.C."/>
        </authorList>
    </citation>
    <scope>NUCLEOTIDE SEQUENCE [LARGE SCALE GENOMIC DNA]</scope>
    <source>
        <strain>Berkeley</strain>
    </source>
</reference>
<reference key="2">
    <citation type="journal article" date="2002" name="Genome Biol.">
        <title>Annotation of the Drosophila melanogaster euchromatic genome: a systematic review.</title>
        <authorList>
            <person name="Misra S."/>
            <person name="Crosby M.A."/>
            <person name="Mungall C.J."/>
            <person name="Matthews B.B."/>
            <person name="Campbell K.S."/>
            <person name="Hradecky P."/>
            <person name="Huang Y."/>
            <person name="Kaminker J.S."/>
            <person name="Millburn G.H."/>
            <person name="Prochnik S.E."/>
            <person name="Smith C.D."/>
            <person name="Tupy J.L."/>
            <person name="Whitfield E.J."/>
            <person name="Bayraktaroglu L."/>
            <person name="Berman B.P."/>
            <person name="Bettencourt B.R."/>
            <person name="Celniker S.E."/>
            <person name="de Grey A.D.N.J."/>
            <person name="Drysdale R.A."/>
            <person name="Harris N.L."/>
            <person name="Richter J."/>
            <person name="Russo S."/>
            <person name="Schroeder A.J."/>
            <person name="Shu S.Q."/>
            <person name="Stapleton M."/>
            <person name="Yamada C."/>
            <person name="Ashburner M."/>
            <person name="Gelbart W.M."/>
            <person name="Rubin G.M."/>
            <person name="Lewis S.E."/>
        </authorList>
    </citation>
    <scope>GENOME REANNOTATION</scope>
    <source>
        <strain>Berkeley</strain>
    </source>
</reference>
<reference key="3">
    <citation type="submission" date="2005-10" db="EMBL/GenBank/DDBJ databases">
        <authorList>
            <person name="Stapleton M."/>
            <person name="Carlson J.W."/>
            <person name="Chavez C."/>
            <person name="Frise E."/>
            <person name="George R.A."/>
            <person name="Pacleb J.M."/>
            <person name="Park S."/>
            <person name="Wan K.H."/>
            <person name="Yu C."/>
            <person name="Celniker S.E."/>
        </authorList>
    </citation>
    <scope>NUCLEOTIDE SEQUENCE [LARGE SCALE MRNA]</scope>
    <source>
        <strain>Berkeley</strain>
        <tissue>Embryo</tissue>
    </source>
</reference>
<reference key="4">
    <citation type="journal article" date="1995" name="J. Physiol. (Lond.)">
        <title>A member of the major intrinsic protein family in Drosophila tubules.</title>
        <authorList>
            <person name="Dow J.A.T."/>
            <person name="Kelly D.C."/>
            <person name="Davies S.A."/>
            <person name="Maddrell S.H.P."/>
            <person name="Brown D."/>
        </authorList>
    </citation>
    <scope>NUCLEOTIDE SEQUENCE [MRNA] OF 82-191</scope>
    <source>
        <strain>Oregon-R</strain>
        <tissue>Malpighian tubule</tissue>
    </source>
</reference>
<feature type="chain" id="PRO_0000063976" description="Aquaporin">
    <location>
        <begin position="1"/>
        <end position="245"/>
    </location>
</feature>
<feature type="topological domain" description="Cytoplasmic" evidence="2">
    <location>
        <begin position="1"/>
        <end position="26"/>
    </location>
</feature>
<feature type="transmembrane region" description="Helical; Name=1" evidence="2">
    <location>
        <begin position="27"/>
        <end position="46"/>
    </location>
</feature>
<feature type="topological domain" description="Extracellular" evidence="2">
    <location>
        <begin position="47"/>
        <end position="51"/>
    </location>
</feature>
<feature type="transmembrane region" description="Helical; Name=2" evidence="2">
    <location>
        <begin position="52"/>
        <end position="72"/>
    </location>
</feature>
<feature type="topological domain" description="Cytoplasmic" evidence="2">
    <location>
        <begin position="73"/>
        <end position="94"/>
    </location>
</feature>
<feature type="transmembrane region" description="Helical; Name=3" evidence="2">
    <location>
        <begin position="95"/>
        <end position="115"/>
    </location>
</feature>
<feature type="topological domain" description="Extracellular" evidence="2">
    <location>
        <begin position="116"/>
        <end position="132"/>
    </location>
</feature>
<feature type="transmembrane region" description="Helical; Name=4" evidence="2">
    <location>
        <begin position="133"/>
        <end position="153"/>
    </location>
</feature>
<feature type="topological domain" description="Cytoplasmic" evidence="2">
    <location>
        <begin position="154"/>
        <end position="163"/>
    </location>
</feature>
<feature type="transmembrane region" description="Helical; Name=5" evidence="2">
    <location>
        <begin position="164"/>
        <end position="184"/>
    </location>
</feature>
<feature type="topological domain" description="Extracellular" evidence="2">
    <location>
        <begin position="185"/>
        <end position="205"/>
    </location>
</feature>
<feature type="transmembrane region" description="Helical; Name=6" evidence="2">
    <location>
        <begin position="206"/>
        <end position="226"/>
    </location>
</feature>
<feature type="topological domain" description="Cytoplasmic" evidence="2">
    <location>
        <begin position="227"/>
        <end position="245"/>
    </location>
</feature>
<feature type="short sequence motif" description="NPA 1">
    <location>
        <begin position="76"/>
        <end position="78"/>
    </location>
</feature>
<feature type="short sequence motif" description="NPA 2">
    <location>
        <begin position="192"/>
        <end position="194"/>
    </location>
</feature>
<feature type="sequence conflict" description="In Ref. 4; AAA81324." evidence="3" ref="4">
    <original>GDLGVSSF</original>
    <variation>ATWSILL</variation>
    <location>
        <begin position="122"/>
        <end position="129"/>
    </location>
</feature>
<feature type="sequence conflict" description="In Ref. 4; AAA81324." evidence="3" ref="4">
    <original>M</original>
    <variation>T</variation>
    <location>
        <position position="191"/>
    </location>
</feature>